<evidence type="ECO:0000255" key="1">
    <source>
        <dbReference type="HAMAP-Rule" id="MF_01830"/>
    </source>
</evidence>
<feature type="chain" id="PRO_1000073688" description="Putative hydro-lyase AZC_4080">
    <location>
        <begin position="1"/>
        <end position="272"/>
    </location>
</feature>
<gene>
    <name type="ordered locus">AZC_4080</name>
</gene>
<keyword id="KW-0456">Lyase</keyword>
<keyword id="KW-1185">Reference proteome</keyword>
<accession>A8HRQ8</accession>
<proteinExistence type="inferred from homology"/>
<name>Y4080_AZOC5</name>
<dbReference type="EC" id="4.2.1.-" evidence="1"/>
<dbReference type="EMBL" id="AP009384">
    <property type="protein sequence ID" value="BAF90078.1"/>
    <property type="molecule type" value="Genomic_DNA"/>
</dbReference>
<dbReference type="RefSeq" id="WP_012172600.1">
    <property type="nucleotide sequence ID" value="NC_009937.1"/>
</dbReference>
<dbReference type="SMR" id="A8HRQ8"/>
<dbReference type="STRING" id="438753.AZC_4080"/>
<dbReference type="KEGG" id="azc:AZC_4080"/>
<dbReference type="eggNOG" id="COG4336">
    <property type="taxonomic scope" value="Bacteria"/>
</dbReference>
<dbReference type="HOGENOM" id="CLU_059759_0_0_5"/>
<dbReference type="Proteomes" id="UP000000270">
    <property type="component" value="Chromosome"/>
</dbReference>
<dbReference type="GO" id="GO:0016829">
    <property type="term" value="F:lyase activity"/>
    <property type="evidence" value="ECO:0007669"/>
    <property type="project" value="UniProtKB-KW"/>
</dbReference>
<dbReference type="FunFam" id="3.30.2040.10:FF:000001">
    <property type="entry name" value="D-glutamate cyclase, mitochondrial"/>
    <property type="match status" value="1"/>
</dbReference>
<dbReference type="Gene3D" id="3.40.1640.10">
    <property type="entry name" value="PSTPO5379-like"/>
    <property type="match status" value="1"/>
</dbReference>
<dbReference type="Gene3D" id="3.30.2040.10">
    <property type="entry name" value="PSTPO5379-like domain"/>
    <property type="match status" value="1"/>
</dbReference>
<dbReference type="HAMAP" id="MF_01830">
    <property type="entry name" value="Hydro_lyase"/>
    <property type="match status" value="1"/>
</dbReference>
<dbReference type="InterPro" id="IPR009906">
    <property type="entry name" value="D-Glu_cyclase"/>
</dbReference>
<dbReference type="InterPro" id="IPR038021">
    <property type="entry name" value="Putative_hydro-lyase"/>
</dbReference>
<dbReference type="InterPro" id="IPR016938">
    <property type="entry name" value="UPF0317"/>
</dbReference>
<dbReference type="NCBIfam" id="NF003969">
    <property type="entry name" value="PRK05463.1"/>
    <property type="match status" value="1"/>
</dbReference>
<dbReference type="PANTHER" id="PTHR32022">
    <property type="entry name" value="D-GLUTAMATE CYCLASE, MITOCHONDRIAL"/>
    <property type="match status" value="1"/>
</dbReference>
<dbReference type="PANTHER" id="PTHR32022:SF10">
    <property type="entry name" value="D-GLUTAMATE CYCLASE, MITOCHONDRIAL"/>
    <property type="match status" value="1"/>
</dbReference>
<dbReference type="Pfam" id="PF07286">
    <property type="entry name" value="D-Glu_cyclase"/>
    <property type="match status" value="1"/>
</dbReference>
<dbReference type="PIRSF" id="PIRSF029755">
    <property type="entry name" value="UCP029755"/>
    <property type="match status" value="1"/>
</dbReference>
<dbReference type="SUPFAM" id="SSF160920">
    <property type="entry name" value="PSTPO5379-like"/>
    <property type="match status" value="1"/>
</dbReference>
<sequence>MTAHASIATPGGISLATGRDVRLASRSGALTGSTAGFAPGFVQANLAILPAKLAFDFLRFCQRNPKPCPVIGVSEPGDPTLSSIGLDLDIRTDVPGYCVYKDGVLVDEPADLKAYWREDLVTFAIGCSLSFEEALMAADIPLRHVEKGVKVPMFRTNIACVPAGPFAGPMVVSMRPMTPANAIRAVQITSRFPSVHGAPIHIGLPEAIGIKDLSKPDYGDAVEILEGEIPVFWACGVTPQSVISAAKIEYALAHGPGMMLCTDLKNSALATG</sequence>
<reference key="1">
    <citation type="submission" date="2007-04" db="EMBL/GenBank/DDBJ databases">
        <title>Complete genome sequence of the nitrogen-fixing bacterium Azorhizobium caulinodans ORS571.</title>
        <authorList>
            <person name="Lee K.B."/>
            <person name="Backer P.D."/>
            <person name="Aono T."/>
            <person name="Liu C.T."/>
            <person name="Suzuki S."/>
            <person name="Suzuki T."/>
            <person name="Kaneko T."/>
            <person name="Yamada M."/>
            <person name="Tabata S."/>
            <person name="Kupfer D.M."/>
            <person name="Najar F.Z."/>
            <person name="Wiley G.B."/>
            <person name="Roe B."/>
            <person name="Binnewies T."/>
            <person name="Ussery D."/>
            <person name="Vereecke D."/>
            <person name="Gevers D."/>
            <person name="Holsters M."/>
            <person name="Oyaizu H."/>
        </authorList>
    </citation>
    <scope>NUCLEOTIDE SEQUENCE [LARGE SCALE GENOMIC DNA]</scope>
    <source>
        <strain>ATCC 43989 / DSM 5975 / JCM 20966 / LMG 6465 / NBRC 14845 / NCIMB 13405 / ORS 571</strain>
    </source>
</reference>
<protein>
    <recommendedName>
        <fullName evidence="1">Putative hydro-lyase AZC_4080</fullName>
        <ecNumber evidence="1">4.2.1.-</ecNumber>
    </recommendedName>
</protein>
<comment type="similarity">
    <text evidence="1">Belongs to the D-glutamate cyclase family.</text>
</comment>
<organism>
    <name type="scientific">Azorhizobium caulinodans (strain ATCC 43989 / DSM 5975 / JCM 20966 / LMG 6465 / NBRC 14845 / NCIMB 13405 / ORS 571)</name>
    <dbReference type="NCBI Taxonomy" id="438753"/>
    <lineage>
        <taxon>Bacteria</taxon>
        <taxon>Pseudomonadati</taxon>
        <taxon>Pseudomonadota</taxon>
        <taxon>Alphaproteobacteria</taxon>
        <taxon>Hyphomicrobiales</taxon>
        <taxon>Xanthobacteraceae</taxon>
        <taxon>Azorhizobium</taxon>
    </lineage>
</organism>